<keyword id="KW-0963">Cytoplasm</keyword>
<keyword id="KW-0378">Hydrolase</keyword>
<keyword id="KW-0645">Protease</keyword>
<keyword id="KW-1185">Reference proteome</keyword>
<keyword id="KW-0720">Serine protease</keyword>
<proteinExistence type="evidence at protein level"/>
<feature type="chain" id="PRO_0000378281" description="ATP-dependent Clp protease proteolytic subunit">
    <location>
        <begin position="1"/>
        <end position="209"/>
    </location>
</feature>
<feature type="active site" description="Nucleophile" evidence="1">
    <location>
        <position position="106"/>
    </location>
</feature>
<feature type="active site" evidence="1">
    <location>
        <position position="131"/>
    </location>
</feature>
<feature type="mutagenesis site" description="No longer rescues a chromosomal deletion of clpP." evidence="3">
    <original>S</original>
    <variation>A</variation>
    <location>
        <position position="106"/>
    </location>
</feature>
<reference key="1">
    <citation type="journal article" date="1998" name="EMBO J.">
        <title>An essential protease involved in bacterial cell-cycle control.</title>
        <authorList>
            <person name="Jenal U."/>
            <person name="Fuchs T."/>
        </authorList>
    </citation>
    <scope>NUCLEOTIDE SEQUENCE [GENOMIC DNA]</scope>
    <scope>FUNCTION</scope>
    <scope>DISRUPTION PHENOTYPE</scope>
    <scope>MUTAGENESIS OF SER-106</scope>
    <source>
        <strain>NA1000 / CB15N</strain>
    </source>
</reference>
<reference key="2">
    <citation type="journal article" date="2010" name="J. Bacteriol.">
        <title>The genetic basis of laboratory adaptation in Caulobacter crescentus.</title>
        <authorList>
            <person name="Marks M.E."/>
            <person name="Castro-Rojas C.M."/>
            <person name="Teiling C."/>
            <person name="Du L."/>
            <person name="Kapatral V."/>
            <person name="Walunas T.L."/>
            <person name="Crosson S."/>
        </authorList>
    </citation>
    <scope>NUCLEOTIDE SEQUENCE [LARGE SCALE GENOMIC DNA]</scope>
    <source>
        <strain>NA1000 / CB15N</strain>
    </source>
</reference>
<reference key="3">
    <citation type="journal article" date="2013" name="Mol. Cell">
        <title>A bacterial toxin inhibits DNA replication elongation through a direct interaction with the beta sliding clamp.</title>
        <authorList>
            <person name="Aakre C.D."/>
            <person name="Phung T.N."/>
            <person name="Huang D."/>
            <person name="Laub M.T."/>
        </authorList>
    </citation>
    <scope>FUNCTION</scope>
    <scope>DISRUPTION PHENOTYPE</scope>
</reference>
<name>CLPP_CAUVN</name>
<protein>
    <recommendedName>
        <fullName evidence="1">ATP-dependent Clp protease proteolytic subunit</fullName>
        <ecNumber evidence="1">3.4.21.92</ecNumber>
    </recommendedName>
    <alternativeName>
        <fullName evidence="1">Endopeptidase Clp</fullName>
    </alternativeName>
</protein>
<accession>B8GX16</accession>
<accession>O87706</accession>
<comment type="function">
    <text evidence="1 2 3">Cleaves peptides in various proteins in a process that requires ATP hydrolysis. Has a chymotrypsin-like activity (By similarity). Plays a major role in the degradation of misfolded proteins (By similarity). Required for degradation of response regulator CtrA, thus contributing to the G1-to-S transition (PubMed:9755166). Required to degrade DNA replication inhibitor toxin SocB, this function is probably the reason why the protease is essential in this organism (PubMed:24239291).</text>
</comment>
<comment type="catalytic activity">
    <reaction evidence="1">
        <text>Hydrolysis of proteins to small peptides in the presence of ATP and magnesium. alpha-casein is the usual test substrate. In the absence of ATP, only oligopeptides shorter than five residues are hydrolyzed (such as succinyl-Leu-Tyr-|-NHMec, and Leu-Tyr-Leu-|-Tyr-Trp, in which cleavage of the -Tyr-|-Leu- and -Tyr-|-Trp bonds also occurs).</text>
        <dbReference type="EC" id="3.4.21.92"/>
    </reaction>
</comment>
<comment type="subunit">
    <text evidence="1">Fourteen ClpP subunits assemble into 2 heptameric rings which stack back to back to give a disk-like structure with a central cavity, resembling the structure of eukaryotic proteasomes.</text>
</comment>
<comment type="subcellular location">
    <subcellularLocation>
        <location evidence="1">Cytoplasm</location>
    </subcellularLocation>
</comment>
<comment type="disruption phenotype">
    <text evidence="2 3">Essential, it cannot be deleted (PubMed:24239291, PubMed:9755166). When depleted for ClpP cells arrest before the initiation of chromosome replication and are blocked in the cell division process (PubMed:9755166). Deletion of socB permits slower than wild-type growth of the clpP disruption.</text>
</comment>
<comment type="similarity">
    <text evidence="1">Belongs to the peptidase S14 family.</text>
</comment>
<comment type="sequence caution" evidence="4">
    <conflict type="erroneous initiation">
        <sequence resource="EMBL-CDS" id="ACL95506"/>
    </conflict>
    <text>Extended N-terminus.</text>
</comment>
<comment type="sequence caution" evidence="4">
    <conflict type="erroneous initiation">
        <sequence resource="EMBL-CDS" id="CAA09090"/>
    </conflict>
    <text>Extended N-terminus.</text>
</comment>
<evidence type="ECO:0000255" key="1">
    <source>
        <dbReference type="HAMAP-Rule" id="MF_00444"/>
    </source>
</evidence>
<evidence type="ECO:0000269" key="2">
    <source>
    </source>
</evidence>
<evidence type="ECO:0000269" key="3">
    <source>
    </source>
</evidence>
<evidence type="ECO:0000305" key="4"/>
<sequence>MYDPVSTAMNLVPMVVEQTSRGERAFDIFSRLLKERIIFLTGPVEDGMASLICAQLLFLESENPKKEIAMYINSPGGVVTAGLAIYDTMQYIKSPVSTVCMGMAASMGSLLLAAGAAGQRISLPNARIMVHQPSGGFRGQASDIERHAEDIIKTKRRLNEIYVKHCGRTYEEVERTLDRDHFMSADEAKAWGLVDHVYDSRDAAEAGAE</sequence>
<organism>
    <name type="scientific">Caulobacter vibrioides (strain NA1000 / CB15N)</name>
    <name type="common">Caulobacter crescentus</name>
    <dbReference type="NCBI Taxonomy" id="565050"/>
    <lineage>
        <taxon>Bacteria</taxon>
        <taxon>Pseudomonadati</taxon>
        <taxon>Pseudomonadota</taxon>
        <taxon>Alphaproteobacteria</taxon>
        <taxon>Caulobacterales</taxon>
        <taxon>Caulobacteraceae</taxon>
        <taxon>Caulobacter</taxon>
    </lineage>
</organism>
<gene>
    <name evidence="1" type="primary">clpP</name>
    <name type="ordered locus">CCNA_02041</name>
</gene>
<dbReference type="EC" id="3.4.21.92" evidence="1"/>
<dbReference type="EMBL" id="AJ010321">
    <property type="protein sequence ID" value="CAA09090.1"/>
    <property type="status" value="ALT_INIT"/>
    <property type="molecule type" value="Genomic_DNA"/>
</dbReference>
<dbReference type="EMBL" id="CP001340">
    <property type="protein sequence ID" value="ACL95506.1"/>
    <property type="status" value="ALT_INIT"/>
    <property type="molecule type" value="Genomic_DNA"/>
</dbReference>
<dbReference type="RefSeq" id="YP_002517414.1">
    <property type="nucleotide sequence ID" value="NC_011916.1"/>
</dbReference>
<dbReference type="SMR" id="B8GX16"/>
<dbReference type="MEROPS" id="S14.001"/>
<dbReference type="GeneID" id="7333372"/>
<dbReference type="KEGG" id="ccs:CCNA_02041"/>
<dbReference type="PATRIC" id="fig|565050.3.peg.1999"/>
<dbReference type="HOGENOM" id="CLU_058707_3_2_5"/>
<dbReference type="OrthoDB" id="9802800at2"/>
<dbReference type="PhylomeDB" id="B8GX16"/>
<dbReference type="BRENDA" id="3.4.21.92">
    <property type="organism ID" value="1218"/>
</dbReference>
<dbReference type="PRO" id="PR:B8GX16"/>
<dbReference type="Proteomes" id="UP000001364">
    <property type="component" value="Chromosome"/>
</dbReference>
<dbReference type="GO" id="GO:0005737">
    <property type="term" value="C:cytoplasm"/>
    <property type="evidence" value="ECO:0007669"/>
    <property type="project" value="UniProtKB-SubCell"/>
</dbReference>
<dbReference type="GO" id="GO:0009368">
    <property type="term" value="C:endopeptidase Clp complex"/>
    <property type="evidence" value="ECO:0007669"/>
    <property type="project" value="TreeGrafter"/>
</dbReference>
<dbReference type="GO" id="GO:0004176">
    <property type="term" value="F:ATP-dependent peptidase activity"/>
    <property type="evidence" value="ECO:0007669"/>
    <property type="project" value="InterPro"/>
</dbReference>
<dbReference type="GO" id="GO:0051117">
    <property type="term" value="F:ATPase binding"/>
    <property type="evidence" value="ECO:0007669"/>
    <property type="project" value="TreeGrafter"/>
</dbReference>
<dbReference type="GO" id="GO:0004252">
    <property type="term" value="F:serine-type endopeptidase activity"/>
    <property type="evidence" value="ECO:0007669"/>
    <property type="project" value="UniProtKB-UniRule"/>
</dbReference>
<dbReference type="GO" id="GO:0006515">
    <property type="term" value="P:protein quality control for misfolded or incompletely synthesized proteins"/>
    <property type="evidence" value="ECO:0007669"/>
    <property type="project" value="TreeGrafter"/>
</dbReference>
<dbReference type="CDD" id="cd07017">
    <property type="entry name" value="S14_ClpP_2"/>
    <property type="match status" value="1"/>
</dbReference>
<dbReference type="FunFam" id="3.90.226.10:FF:000001">
    <property type="entry name" value="ATP-dependent Clp protease proteolytic subunit"/>
    <property type="match status" value="1"/>
</dbReference>
<dbReference type="Gene3D" id="3.90.226.10">
    <property type="entry name" value="2-enoyl-CoA Hydratase, Chain A, domain 1"/>
    <property type="match status" value="1"/>
</dbReference>
<dbReference type="HAMAP" id="MF_00444">
    <property type="entry name" value="ClpP"/>
    <property type="match status" value="1"/>
</dbReference>
<dbReference type="InterPro" id="IPR001907">
    <property type="entry name" value="ClpP"/>
</dbReference>
<dbReference type="InterPro" id="IPR029045">
    <property type="entry name" value="ClpP/crotonase-like_dom_sf"/>
</dbReference>
<dbReference type="InterPro" id="IPR023562">
    <property type="entry name" value="ClpP/TepA"/>
</dbReference>
<dbReference type="InterPro" id="IPR033135">
    <property type="entry name" value="ClpP_His_AS"/>
</dbReference>
<dbReference type="InterPro" id="IPR018215">
    <property type="entry name" value="ClpP_Ser_AS"/>
</dbReference>
<dbReference type="NCBIfam" id="NF001368">
    <property type="entry name" value="PRK00277.1"/>
    <property type="match status" value="1"/>
</dbReference>
<dbReference type="NCBIfam" id="NF009205">
    <property type="entry name" value="PRK12553.1"/>
    <property type="match status" value="1"/>
</dbReference>
<dbReference type="PANTHER" id="PTHR10381">
    <property type="entry name" value="ATP-DEPENDENT CLP PROTEASE PROTEOLYTIC SUBUNIT"/>
    <property type="match status" value="1"/>
</dbReference>
<dbReference type="PANTHER" id="PTHR10381:SF70">
    <property type="entry name" value="ATP-DEPENDENT CLP PROTEASE PROTEOLYTIC SUBUNIT"/>
    <property type="match status" value="1"/>
</dbReference>
<dbReference type="Pfam" id="PF00574">
    <property type="entry name" value="CLP_protease"/>
    <property type="match status" value="1"/>
</dbReference>
<dbReference type="PRINTS" id="PR00127">
    <property type="entry name" value="CLPPROTEASEP"/>
</dbReference>
<dbReference type="SUPFAM" id="SSF52096">
    <property type="entry name" value="ClpP/crotonase"/>
    <property type="match status" value="1"/>
</dbReference>
<dbReference type="PROSITE" id="PS00382">
    <property type="entry name" value="CLP_PROTEASE_HIS"/>
    <property type="match status" value="1"/>
</dbReference>
<dbReference type="PROSITE" id="PS00381">
    <property type="entry name" value="CLP_PROTEASE_SER"/>
    <property type="match status" value="1"/>
</dbReference>